<dbReference type="EMBL" id="CP000308">
    <property type="protein sequence ID" value="ABG14953.1"/>
    <property type="molecule type" value="Genomic_DNA"/>
</dbReference>
<dbReference type="RefSeq" id="WP_002209260.1">
    <property type="nucleotide sequence ID" value="NZ_CP009906.1"/>
</dbReference>
<dbReference type="SMR" id="Q1C3L9"/>
<dbReference type="GeneID" id="57975225"/>
<dbReference type="KEGG" id="ypa:YPA_2991"/>
<dbReference type="Proteomes" id="UP000001971">
    <property type="component" value="Chromosome"/>
</dbReference>
<dbReference type="GO" id="GO:0009279">
    <property type="term" value="C:cell outer membrane"/>
    <property type="evidence" value="ECO:0007669"/>
    <property type="project" value="TreeGrafter"/>
</dbReference>
<dbReference type="GO" id="GO:0005886">
    <property type="term" value="C:plasma membrane"/>
    <property type="evidence" value="ECO:0007669"/>
    <property type="project" value="UniProtKB-SubCell"/>
</dbReference>
<dbReference type="GO" id="GO:0051301">
    <property type="term" value="P:cell division"/>
    <property type="evidence" value="ECO:0007669"/>
    <property type="project" value="UniProtKB-KW"/>
</dbReference>
<dbReference type="GO" id="GO:0046813">
    <property type="term" value="P:receptor-mediated virion attachment to host cell"/>
    <property type="evidence" value="ECO:0007669"/>
    <property type="project" value="TreeGrafter"/>
</dbReference>
<dbReference type="Gene3D" id="1.25.40.10">
    <property type="entry name" value="Tetratricopeptide repeat domain"/>
    <property type="match status" value="1"/>
</dbReference>
<dbReference type="InterPro" id="IPR023605">
    <property type="entry name" value="Lipoprotein_NlpI"/>
</dbReference>
<dbReference type="InterPro" id="IPR011990">
    <property type="entry name" value="TPR-like_helical_dom_sf"/>
</dbReference>
<dbReference type="InterPro" id="IPR019734">
    <property type="entry name" value="TPR_rpt"/>
</dbReference>
<dbReference type="InterPro" id="IPR050498">
    <property type="entry name" value="Ycf3"/>
</dbReference>
<dbReference type="NCBIfam" id="NF008391">
    <property type="entry name" value="PRK11189.1"/>
    <property type="match status" value="1"/>
</dbReference>
<dbReference type="PANTHER" id="PTHR44858">
    <property type="entry name" value="TETRATRICOPEPTIDE REPEAT PROTEIN 6"/>
    <property type="match status" value="1"/>
</dbReference>
<dbReference type="PANTHER" id="PTHR44858:SF1">
    <property type="entry name" value="UDP-N-ACETYLGLUCOSAMINE--PEPTIDE N-ACETYLGLUCOSAMINYLTRANSFERASE SPINDLY-RELATED"/>
    <property type="match status" value="1"/>
</dbReference>
<dbReference type="Pfam" id="PF13432">
    <property type="entry name" value="TPR_16"/>
    <property type="match status" value="1"/>
</dbReference>
<dbReference type="Pfam" id="PF13181">
    <property type="entry name" value="TPR_8"/>
    <property type="match status" value="1"/>
</dbReference>
<dbReference type="PIRSF" id="PIRSF004654">
    <property type="entry name" value="NlpI"/>
    <property type="match status" value="1"/>
</dbReference>
<dbReference type="SMART" id="SM00028">
    <property type="entry name" value="TPR"/>
    <property type="match status" value="2"/>
</dbReference>
<dbReference type="SUPFAM" id="SSF48452">
    <property type="entry name" value="TPR-like"/>
    <property type="match status" value="1"/>
</dbReference>
<dbReference type="PROSITE" id="PS51257">
    <property type="entry name" value="PROKAR_LIPOPROTEIN"/>
    <property type="match status" value="1"/>
</dbReference>
<dbReference type="PROSITE" id="PS50005">
    <property type="entry name" value="TPR"/>
    <property type="match status" value="4"/>
</dbReference>
<dbReference type="PROSITE" id="PS50293">
    <property type="entry name" value="TPR_REGION"/>
    <property type="match status" value="1"/>
</dbReference>
<proteinExistence type="inferred from homology"/>
<evidence type="ECO:0000250" key="1"/>
<evidence type="ECO:0000255" key="2">
    <source>
        <dbReference type="PROSITE-ProRule" id="PRU00303"/>
    </source>
</evidence>
<protein>
    <recommendedName>
        <fullName>Lipoprotein NlpI</fullName>
    </recommendedName>
</protein>
<comment type="function">
    <text evidence="1">May be involved in cell division. May play a role in bacterial septation or regulation of cell wall degradation during cell division (By similarity).</text>
</comment>
<comment type="subunit">
    <text evidence="1">Homodimer.</text>
</comment>
<comment type="subcellular location">
    <subcellularLocation>
        <location evidence="2">Cell membrane</location>
        <topology evidence="2">Lipid-anchor</topology>
    </subcellularLocation>
</comment>
<feature type="signal peptide" evidence="2">
    <location>
        <begin position="1"/>
        <end position="18"/>
    </location>
</feature>
<feature type="chain" id="PRO_0000413485" description="Lipoprotein NlpI">
    <location>
        <begin position="19"/>
        <end position="294"/>
    </location>
</feature>
<feature type="repeat" description="TPR 1">
    <location>
        <begin position="62"/>
        <end position="95"/>
    </location>
</feature>
<feature type="repeat" description="TPR 2">
    <location>
        <begin position="96"/>
        <end position="129"/>
    </location>
</feature>
<feature type="repeat" description="TPR 3">
    <location>
        <begin position="234"/>
        <end position="267"/>
    </location>
</feature>
<feature type="lipid moiety-binding region" description="N-palmitoyl cysteine" evidence="2">
    <location>
        <position position="19"/>
    </location>
</feature>
<feature type="lipid moiety-binding region" description="S-diacylglycerol cysteine" evidence="2">
    <location>
        <position position="19"/>
    </location>
</feature>
<sequence>MKPFLRWCYVATALMLAGCSNHDWRKDEVLAIPLQPTLQQEVILARMEQILASRALTDDERAQLLYERGVLYDSLGLRALARNDFSQALAIRPDMPEVFNYLGIYLTQAGNFDAAYEAFDSVLELDPTYNYARLNRGIALYYGGRFPLAQDDLQAFYQDDPNDPFRSLWLYLVEREIDPKAAVVALQQRYEKSDRGQWGWNIVEFYLGKISEKSLMERLKADATDNTSLAEHLSETDFYLGKHYLSLGDKNTASVLFKLTVANNVHNFVEHRYALLELALLGQEQDDLSESDQQ</sequence>
<organism>
    <name type="scientific">Yersinia pestis bv. Antiqua (strain Antiqua)</name>
    <dbReference type="NCBI Taxonomy" id="360102"/>
    <lineage>
        <taxon>Bacteria</taxon>
        <taxon>Pseudomonadati</taxon>
        <taxon>Pseudomonadota</taxon>
        <taxon>Gammaproteobacteria</taxon>
        <taxon>Enterobacterales</taxon>
        <taxon>Yersiniaceae</taxon>
        <taxon>Yersinia</taxon>
    </lineage>
</organism>
<accession>Q1C3L9</accession>
<reference key="1">
    <citation type="journal article" date="2006" name="J. Bacteriol.">
        <title>Complete genome sequence of Yersinia pestis strains Antiqua and Nepal516: evidence of gene reduction in an emerging pathogen.</title>
        <authorList>
            <person name="Chain P.S.G."/>
            <person name="Hu P."/>
            <person name="Malfatti S.A."/>
            <person name="Radnedge L."/>
            <person name="Larimer F."/>
            <person name="Vergez L.M."/>
            <person name="Worsham P."/>
            <person name="Chu M.C."/>
            <person name="Andersen G.L."/>
        </authorList>
    </citation>
    <scope>NUCLEOTIDE SEQUENCE [LARGE SCALE GENOMIC DNA]</scope>
    <source>
        <strain>Antiqua</strain>
    </source>
</reference>
<gene>
    <name type="primary">nlpI</name>
    <name type="ordered locus">YPA_2991</name>
</gene>
<keyword id="KW-0131">Cell cycle</keyword>
<keyword id="KW-0132">Cell division</keyword>
<keyword id="KW-1003">Cell membrane</keyword>
<keyword id="KW-0449">Lipoprotein</keyword>
<keyword id="KW-0472">Membrane</keyword>
<keyword id="KW-0564">Palmitate</keyword>
<keyword id="KW-0677">Repeat</keyword>
<keyword id="KW-0732">Signal</keyword>
<keyword id="KW-0802">TPR repeat</keyword>
<name>NLPI_YERPA</name>